<protein>
    <recommendedName>
        <fullName>Transmembrane protein 178A</fullName>
    </recommendedName>
</protein>
<comment type="function">
    <text evidence="1">May act as a negative regulator of osteoclast differentiation.</text>
</comment>
<comment type="subcellular location">
    <subcellularLocation>
        <location evidence="1">Endoplasmic reticulum membrane</location>
        <topology evidence="2">Multi-pass membrane protein</topology>
    </subcellularLocation>
</comment>
<comment type="similarity">
    <text evidence="3">Belongs to the TMEM178 family.</text>
</comment>
<reference key="1">
    <citation type="submission" date="2004-10" db="EMBL/GenBank/DDBJ databases">
        <authorList>
            <consortium name="NIH - Xenopus Gene Collection (XGC) project"/>
        </authorList>
    </citation>
    <scope>NUCLEOTIDE SEQUENCE [LARGE SCALE MRNA]</scope>
    <source>
        <tissue>Brain</tissue>
    </source>
</reference>
<organism>
    <name type="scientific">Xenopus laevis</name>
    <name type="common">African clawed frog</name>
    <dbReference type="NCBI Taxonomy" id="8355"/>
    <lineage>
        <taxon>Eukaryota</taxon>
        <taxon>Metazoa</taxon>
        <taxon>Chordata</taxon>
        <taxon>Craniata</taxon>
        <taxon>Vertebrata</taxon>
        <taxon>Euteleostomi</taxon>
        <taxon>Amphibia</taxon>
        <taxon>Batrachia</taxon>
        <taxon>Anura</taxon>
        <taxon>Pipoidea</taxon>
        <taxon>Pipidae</taxon>
        <taxon>Xenopodinae</taxon>
        <taxon>Xenopus</taxon>
        <taxon>Xenopus</taxon>
    </lineage>
</organism>
<proteinExistence type="evidence at transcript level"/>
<name>T178A_XENLA</name>
<gene>
    <name type="primary">tmem178a</name>
    <name type="synonym">tmem178.1</name>
</gene>
<evidence type="ECO:0000250" key="1">
    <source>
        <dbReference type="UniProtKB" id="Q9CZ16"/>
    </source>
</evidence>
<evidence type="ECO:0000255" key="2"/>
<evidence type="ECO:0000305" key="3"/>
<keyword id="KW-0256">Endoplasmic reticulum</keyword>
<keyword id="KW-0325">Glycoprotein</keyword>
<keyword id="KW-0472">Membrane</keyword>
<keyword id="KW-1185">Reference proteome</keyword>
<keyword id="KW-0732">Signal</keyword>
<keyword id="KW-0812">Transmembrane</keyword>
<keyword id="KW-1133">Transmembrane helix</keyword>
<accession>Q5XGU1</accession>
<feature type="signal peptide" evidence="2">
    <location>
        <begin position="1"/>
        <end position="25"/>
    </location>
</feature>
<feature type="chain" id="PRO_0000287284" description="Transmembrane protein 178A">
    <location>
        <begin position="26"/>
        <end position="304"/>
    </location>
</feature>
<feature type="topological domain" description="Extracellular" evidence="2">
    <location>
        <begin position="26"/>
        <end position="186"/>
    </location>
</feature>
<feature type="transmembrane region" description="Helical" evidence="2">
    <location>
        <begin position="187"/>
        <end position="207"/>
    </location>
</feature>
<feature type="topological domain" description="Cytoplasmic" evidence="2">
    <location>
        <begin position="208"/>
        <end position="215"/>
    </location>
</feature>
<feature type="transmembrane region" description="Helical" evidence="2">
    <location>
        <begin position="216"/>
        <end position="236"/>
    </location>
</feature>
<feature type="topological domain" description="Extracellular" evidence="2">
    <location>
        <begin position="237"/>
        <end position="267"/>
    </location>
</feature>
<feature type="transmembrane region" description="Helical" evidence="2">
    <location>
        <begin position="268"/>
        <end position="288"/>
    </location>
</feature>
<feature type="topological domain" description="Cytoplasmic" evidence="2">
    <location>
        <begin position="289"/>
        <end position="304"/>
    </location>
</feature>
<feature type="glycosylation site" description="N-linked (GlcNAc...) asparagine" evidence="2">
    <location>
        <position position="165"/>
    </location>
</feature>
<dbReference type="EMBL" id="BC084338">
    <property type="protein sequence ID" value="AAH84338.1"/>
    <property type="molecule type" value="mRNA"/>
</dbReference>
<dbReference type="RefSeq" id="NP_001088305.1">
    <property type="nucleotide sequence ID" value="NM_001094836.1"/>
</dbReference>
<dbReference type="GlyCosmos" id="Q5XGU1">
    <property type="glycosylation" value="1 site, No reported glycans"/>
</dbReference>
<dbReference type="DNASU" id="495141"/>
<dbReference type="GeneID" id="495141"/>
<dbReference type="KEGG" id="xla:495141"/>
<dbReference type="AGR" id="Xenbase:XB-GENE-942690"/>
<dbReference type="CTD" id="495141"/>
<dbReference type="Xenbase" id="XB-GENE-942690">
    <property type="gene designation" value="tmem178a.S"/>
</dbReference>
<dbReference type="OMA" id="QYGWSIC"/>
<dbReference type="OrthoDB" id="9941453at2759"/>
<dbReference type="Proteomes" id="UP000186698">
    <property type="component" value="Chromosome 5S"/>
</dbReference>
<dbReference type="Bgee" id="495141">
    <property type="expression patterns" value="Expressed in brain and 11 other cell types or tissues"/>
</dbReference>
<dbReference type="GO" id="GO:0005789">
    <property type="term" value="C:endoplasmic reticulum membrane"/>
    <property type="evidence" value="ECO:0000250"/>
    <property type="project" value="UniProtKB"/>
</dbReference>
<dbReference type="GO" id="GO:0045671">
    <property type="term" value="P:negative regulation of osteoclast differentiation"/>
    <property type="evidence" value="ECO:0000250"/>
    <property type="project" value="UniProtKB"/>
</dbReference>
<dbReference type="GO" id="GO:0051480">
    <property type="term" value="P:regulation of cytosolic calcium ion concentration"/>
    <property type="evidence" value="ECO:0000318"/>
    <property type="project" value="GO_Central"/>
</dbReference>
<dbReference type="FunFam" id="1.20.140.150:FF:000024">
    <property type="entry name" value="Transmembrane protein 178A"/>
    <property type="match status" value="1"/>
</dbReference>
<dbReference type="Gene3D" id="1.20.140.150">
    <property type="match status" value="1"/>
</dbReference>
<dbReference type="InterPro" id="IPR004031">
    <property type="entry name" value="PMP22/EMP/MP20/Claudin"/>
</dbReference>
<dbReference type="InterPro" id="IPR039625">
    <property type="entry name" value="T178A/B"/>
</dbReference>
<dbReference type="PANTHER" id="PTHR32005:SF4">
    <property type="entry name" value="TRANSMEMBRANE PROTEIN 178A"/>
    <property type="match status" value="1"/>
</dbReference>
<dbReference type="PANTHER" id="PTHR32005">
    <property type="entry name" value="TRANSMEMBRANE PROTEIN 178B-RELATED"/>
    <property type="match status" value="1"/>
</dbReference>
<dbReference type="Pfam" id="PF13903">
    <property type="entry name" value="Claudin_2"/>
    <property type="match status" value="1"/>
</dbReference>
<dbReference type="PRINTS" id="PR01077">
    <property type="entry name" value="CLAUDIN"/>
</dbReference>
<sequence>MESRGLVTAVSLTLSICSLLLLVTAIFTDHWYETDTRKHKEMCDSQGNSDPTEQKNRLMPLYQLPFRGDPSNTRRLGLLSPAPAGGVREPEDLLENWRSLLGLGVLESDCGRPLFSTYSGLWRKCYIMGIDKDIDSLIIKGIAQKCTAIKYHFSHPIRLRNIPFNLTRAIQQDEWHLLHLRRITAGFLGMAAAVLLCGCIVAAISFFWEESLTQHVAGLLFLMTGIFCTISLCTYAASVAYELNRQPKFIYGLPSDVEHGYSWSLFCAWCSLGLIVAAGCLCTAYPFISRTKILHLKFARDSCV</sequence>